<sequence>EKSCITWRNSCVHND</sequence>
<comment type="function">
    <text evidence="2 3">Modulates Cav2.1/CACNA1A voltage-gated calcium channels (P/Q-type currents) in rat cerebellar Purkinje cells and hippocampal CA1-CA3 neurons. At saturating concentrations (&gt;10 nM) decelerates activation kinetics and slightly increases peak amplitude without affecting deactivation kinetics (By similarity). In vivo, does not cause death when intravenously injected into mice (PubMed:36588719). In rat models, through its activity on Cav2.1/CACNA1A, has an ameliorative effect on memory defects provoked by hyperstimulation of N-methyl-D-aspartate receptors (NMDARs) in the hippocampus (PubMed:36588719).</text>
</comment>
<comment type="subcellular location">
    <subcellularLocation>
        <location evidence="3">Secreted</location>
    </subcellularLocation>
</comment>
<comment type="tissue specificity">
    <text evidence="6">Expressed by the venom gland.</text>
</comment>
<comment type="domain">
    <text evidence="5">The presence of a 'disulfide through disulfide knot' structurally defines this protein as a knottin.</text>
</comment>
<comment type="miscellaneous">
    <text evidence="5">The primary structure of this fragment is identical to that of Omega-lycotoxin-Am1a from Alopecosa marikovskyi (AC P85079).</text>
</comment>
<comment type="similarity">
    <text evidence="5">Belongs to the neurotoxin omega-lctx family.</text>
</comment>
<dbReference type="GO" id="GO:0005576">
    <property type="term" value="C:extracellular region"/>
    <property type="evidence" value="ECO:0007669"/>
    <property type="project" value="UniProtKB-SubCell"/>
</dbReference>
<dbReference type="GO" id="GO:0005246">
    <property type="term" value="F:calcium channel regulator activity"/>
    <property type="evidence" value="ECO:0007669"/>
    <property type="project" value="UniProtKB-KW"/>
</dbReference>
<dbReference type="GO" id="GO:0090729">
    <property type="term" value="F:toxin activity"/>
    <property type="evidence" value="ECO:0007669"/>
    <property type="project" value="UniProtKB-KW"/>
</dbReference>
<organism>
    <name type="scientific">Lycosa praegrandis</name>
    <name type="common">Wolf spider</name>
    <dbReference type="NCBI Taxonomy" id="2066575"/>
    <lineage>
        <taxon>Eukaryota</taxon>
        <taxon>Metazoa</taxon>
        <taxon>Ecdysozoa</taxon>
        <taxon>Arthropoda</taxon>
        <taxon>Chelicerata</taxon>
        <taxon>Arachnida</taxon>
        <taxon>Araneae</taxon>
        <taxon>Araneomorphae</taxon>
        <taxon>Entelegynae</taxon>
        <taxon>Lycosoidea</taxon>
        <taxon>Lycosidae</taxon>
        <taxon>Lycosa</taxon>
    </lineage>
</organism>
<accession>P0DRA9</accession>
<evidence type="ECO:0000250" key="1">
    <source>
        <dbReference type="UniProtKB" id="A0A0G3F8Z3"/>
    </source>
</evidence>
<evidence type="ECO:0000250" key="2">
    <source>
        <dbReference type="UniProtKB" id="P85079"/>
    </source>
</evidence>
<evidence type="ECO:0000269" key="3">
    <source>
    </source>
</evidence>
<evidence type="ECO:0000303" key="4">
    <source>
    </source>
</evidence>
<evidence type="ECO:0000305" key="5"/>
<evidence type="ECO:0000305" key="6">
    <source>
    </source>
</evidence>
<keyword id="KW-0108">Calcium channel impairing toxin</keyword>
<keyword id="KW-0903">Direct protein sequencing</keyword>
<keyword id="KW-1015">Disulfide bond</keyword>
<keyword id="KW-0872">Ion channel impairing toxin</keyword>
<keyword id="KW-0960">Knottin</keyword>
<keyword id="KW-0528">Neurotoxin</keyword>
<keyword id="KW-0964">Secreted</keyword>
<keyword id="KW-0800">Toxin</keyword>
<keyword id="KW-1218">Voltage-gated calcium channel impairing toxin</keyword>
<feature type="chain" id="PRO_0000458990" description="Omega-lycotoxin-Lp1a" evidence="3">
    <location>
        <begin position="1"/>
        <end position="15" status="greater than"/>
    </location>
</feature>
<feature type="disulfide bond" evidence="1">
    <location>
        <begin position="4"/>
        <end status="unknown"/>
    </location>
</feature>
<feature type="disulfide bond" evidence="1">
    <location>
        <begin position="11"/>
        <end status="unknown"/>
    </location>
</feature>
<feature type="non-terminal residue" evidence="3">
    <location>
        <position position="15"/>
    </location>
</feature>
<protein>
    <recommendedName>
        <fullName evidence="5">Omega-lycotoxin-Lp1a</fullName>
        <shortName evidence="5">Omega-LCTX-Lp1a</shortName>
    </recommendedName>
    <alternativeName>
        <fullName evidence="4">Omega-lycotoxin Gsp(267)1e</fullName>
        <shortName evidence="4">OLG1e</shortName>
    </alternativeName>
</protein>
<name>TLCOE_LYCPR</name>
<proteinExistence type="evidence at protein level"/>
<reference key="1">
    <citation type="journal article" date="2022" name="Front. Pharmacol.">
        <title>Ameliorative effects of omega-lycotoxin-Gsp2671e purified from the spider venom of Lycosa praegrandis on memory deficits of glutamate-induced excitotoxicity rat model.</title>
        <authorList>
            <person name="Keimasi M."/>
            <person name="Salehifard K."/>
            <person name="Shahidi M."/>
            <person name="Esmaeili F."/>
            <person name="Mirshah Jafar Esfahani N."/>
            <person name="Beheshti S."/>
            <person name="Amirsadri M."/>
            <person name="Naseri F."/>
            <person name="Keimasi M."/>
            <person name="Ghorbani N."/>
            <person name="Mofid M.R."/>
            <person name="Moradmand M."/>
        </authorList>
    </citation>
    <scope>PROTEIN SEQUENCE</scope>
    <scope>FUNCTION</scope>
    <scope>SUBCELLULAR LOCATION</scope>
    <source>
        <tissue>Venom</tissue>
    </source>
</reference>